<keyword id="KW-1003">Cell membrane</keyword>
<keyword id="KW-0903">Direct protein sequencing</keyword>
<keyword id="KW-0249">Electron transport</keyword>
<keyword id="KW-0472">Membrane</keyword>
<keyword id="KW-0560">Oxidoreductase</keyword>
<keyword id="KW-0874">Quinone</keyword>
<keyword id="KW-0679">Respiratory chain</keyword>
<keyword id="KW-0812">Transmembrane</keyword>
<keyword id="KW-1133">Transmembrane helix</keyword>
<keyword id="KW-0813">Transport</keyword>
<feature type="chain" id="PRO_0000418549" description="Thiosulfate dehydrogenase [quinone] large subunit">
    <location>
        <begin position="1"/>
        <end position="184"/>
    </location>
</feature>
<feature type="transmembrane region" description="Helical" evidence="1">
    <location>
        <begin position="21"/>
        <end position="38"/>
    </location>
</feature>
<feature type="transmembrane region" description="Helical" evidence="1">
    <location>
        <begin position="86"/>
        <end position="106"/>
    </location>
</feature>
<feature type="transmembrane region" description="Helical" evidence="1">
    <location>
        <begin position="109"/>
        <end position="129"/>
    </location>
</feature>
<feature type="transmembrane region" description="Helical" evidence="1">
    <location>
        <begin position="137"/>
        <end position="157"/>
    </location>
</feature>
<comment type="function">
    <text evidence="2">TQO plays a role in sulfur oxidation and is proposed to couple sulfur oxidation to dioxygen reduction; caldariellaquinone or sulfolobus quinone seem to serve to transfer electrons to the electron transport chain terminal oxidase formed by DoxBCE.</text>
</comment>
<comment type="catalytic activity">
    <reaction evidence="2">
        <text>6-decylubiquinone + 2 thiosulfate = 6-decylubiquinol + tetrathionate</text>
        <dbReference type="Rhea" id="RHEA:10936"/>
        <dbReference type="ChEBI" id="CHEBI:15226"/>
        <dbReference type="ChEBI" id="CHEBI:33542"/>
        <dbReference type="ChEBI" id="CHEBI:52020"/>
        <dbReference type="ChEBI" id="CHEBI:52021"/>
        <dbReference type="EC" id="1.8.5.2"/>
    </reaction>
</comment>
<comment type="activity regulation">
    <text evidence="2">Inhibited by sulfite, metabisulfite and dithonite.</text>
</comment>
<comment type="biophysicochemical properties">
    <kinetics>
        <KM evidence="2">3.4 mM for thiosulfate (with ferrocyanide as electron acceptor)</KM>
        <KM evidence="2">5.87 mM for thiosulfate (with decylubiquinol as electron acceptor)</KM>
        <Vmax evidence="2">78.0 umol/min/mg enzyme with thiosulfate as substrate</Vmax>
        <text>KM values measured using the TQO doxDA complex.</text>
    </kinetics>
    <phDependence>
        <text evidence="2">Optimum pH is around 5, the pH range of activity varies in tested buffers.</text>
    </phDependence>
    <temperatureDependence>
        <text evidence="2">Increasing activity in the range between 20 and 92 degrees Celsius.</text>
    </temperatureDependence>
</comment>
<comment type="subunit">
    <text evidence="2 3">Heterodimer of a large and a small subunit in a 2:2 stoichiometry (Probable). TQO may associate with the terminal oxidase formed by doxBCE.</text>
</comment>
<comment type="subcellular location">
    <subcellularLocation>
        <location evidence="2">Cell membrane</location>
        <topology evidence="2">Multi-pass membrane protein</topology>
    </subcellularLocation>
</comment>
<comment type="caution">
    <text evidence="4">The thiosulfate dehydrogenase [quinone] subunits have originally been described as components of the aa3-type terminal oxidase.</text>
</comment>
<name>DOXD_ACIAM</name>
<gene>
    <name type="primary">doxD</name>
</gene>
<protein>
    <recommendedName>
        <fullName>Thiosulfate dehydrogenase [quinone] large subunit</fullName>
        <ecNumber>1.8.5.2</ecNumber>
    </recommendedName>
    <alternativeName>
        <fullName>Thiosulfate:quinone oxidoreductase</fullName>
        <shortName>TQO</shortName>
    </alternativeName>
</protein>
<proteinExistence type="evidence at protein level"/>
<reference key="1">
    <citation type="journal article" date="1997" name="J. Bacteriol.">
        <title>The terminal quinol oxidase of the hyperthermophilic archaeon Acidianus ambivalens exhibits a novel subunit structure and gene organization.</title>
        <authorList>
            <person name="Purschke W.G."/>
            <person name="Schmidt C.L."/>
            <person name="Petersen A."/>
            <person name="Schafer G."/>
        </authorList>
    </citation>
    <scope>NUCLEOTIDE SEQUENCE [GENOMIC DNA]</scope>
    <source>
        <strain>Lei 10 / DSM 3772 / JCM 9191</strain>
    </source>
</reference>
<reference key="2">
    <citation type="journal article" date="2004" name="Mol. Microbiol.">
        <title>Coupling of the pathway of sulphur oxidation to dioxygen reduction: characterization of a novel membrane-bound thiosulphate:quinone oxidoreductase.</title>
        <authorList>
            <person name="Muller F.H."/>
            <person name="Bandeiras T.M."/>
            <person name="Urich T."/>
            <person name="Teixeira M."/>
            <person name="Gomes C.M."/>
            <person name="Kletzin A."/>
        </authorList>
    </citation>
    <scope>PROTEIN SEQUENCE</scope>
    <scope>FUNCTION</scope>
    <scope>IDENTIFICATION BY MASS SPECTROMETRY</scope>
    <scope>CATALYTIC ACTIVITY</scope>
    <scope>ACTIVITY REGULATION</scope>
    <scope>BIOPHYSICOCHEMICAL PROPERTIES</scope>
    <scope>SUBUNIT</scope>
    <scope>SUBCELLULAR LOCATION</scope>
</reference>
<dbReference type="EC" id="1.8.5.2"/>
<dbReference type="EMBL" id="Y08730">
    <property type="protein sequence ID" value="CAA69986.1"/>
    <property type="molecule type" value="Genomic_DNA"/>
</dbReference>
<dbReference type="EMBL" id="Y09614">
    <property type="protein sequence ID" value="CAA70827.1"/>
    <property type="molecule type" value="Genomic_DNA"/>
</dbReference>
<dbReference type="RefSeq" id="WP_013774923.1">
    <property type="nucleotide sequence ID" value="NZ_CP045482.1"/>
</dbReference>
<dbReference type="TCDB" id="3.D.4.9.1">
    <property type="family name" value="the proton-translocating cytochrome oxidase (cox) superfamily"/>
</dbReference>
<dbReference type="GeneID" id="10599553"/>
<dbReference type="GeneID" id="42779564"/>
<dbReference type="BioCyc" id="MetaCyc:MONOMER-12419"/>
<dbReference type="BRENDA" id="1.8.5.2">
    <property type="organism ID" value="86"/>
</dbReference>
<dbReference type="GO" id="GO:0016020">
    <property type="term" value="C:membrane"/>
    <property type="evidence" value="ECO:0000314"/>
    <property type="project" value="UniProtKB"/>
</dbReference>
<dbReference type="GO" id="GO:1990204">
    <property type="term" value="C:oxidoreductase complex"/>
    <property type="evidence" value="ECO:0000314"/>
    <property type="project" value="UniProtKB"/>
</dbReference>
<dbReference type="GO" id="GO:0005886">
    <property type="term" value="C:plasma membrane"/>
    <property type="evidence" value="ECO:0007669"/>
    <property type="project" value="UniProtKB-SubCell"/>
</dbReference>
<dbReference type="GO" id="GO:0048038">
    <property type="term" value="F:quinone binding"/>
    <property type="evidence" value="ECO:0007669"/>
    <property type="project" value="UniProtKB-KW"/>
</dbReference>
<dbReference type="GO" id="GO:0043831">
    <property type="term" value="F:thiosulfate dehydrogenase (quinone) activity"/>
    <property type="evidence" value="ECO:0007669"/>
    <property type="project" value="UniProtKB-EC"/>
</dbReference>
<dbReference type="InterPro" id="IPR007301">
    <property type="entry name" value="DoxD"/>
</dbReference>
<dbReference type="InterPro" id="IPR053663">
    <property type="entry name" value="TQO_large_subunit"/>
</dbReference>
<dbReference type="NCBIfam" id="NF041179">
    <property type="entry name" value="TQO_large_DoxD"/>
    <property type="match status" value="1"/>
</dbReference>
<dbReference type="Pfam" id="PF04173">
    <property type="entry name" value="DoxD"/>
    <property type="match status" value="1"/>
</dbReference>
<organism>
    <name type="scientific">Acidianus ambivalens</name>
    <name type="common">Desulfurolobus ambivalens</name>
    <dbReference type="NCBI Taxonomy" id="2283"/>
    <lineage>
        <taxon>Archaea</taxon>
        <taxon>Thermoproteota</taxon>
        <taxon>Thermoprotei</taxon>
        <taxon>Sulfolobales</taxon>
        <taxon>Sulfolobaceae</taxon>
        <taxon>Acidianus</taxon>
    </lineage>
</organism>
<evidence type="ECO:0000255" key="1"/>
<evidence type="ECO:0000269" key="2">
    <source>
    </source>
</evidence>
<evidence type="ECO:0000305" key="3"/>
<evidence type="ECO:0000305" key="4">
    <source>
    </source>
</evidence>
<sequence>MSGKQSEEFKRTEKMTRMEYLFPVRFAVGWMFLDGGLRKAVLKPAKLDPNSASFVGGKLVNFLPHAGPFKGLLLMTLENRSLDVTFLTVFSYIEIIAGLFIIIGLLTRLAALGALAMSVGFAPAYWLGSTCEDEWQIGALLTAGSVTLMLTAAGRVWGLDYFLYKKLGDRPIANVPILKWIKLW</sequence>
<accession>P97207</accession>